<evidence type="ECO:0000250" key="1"/>
<evidence type="ECO:0000255" key="2"/>
<evidence type="ECO:0000256" key="3">
    <source>
        <dbReference type="SAM" id="MobiDB-lite"/>
    </source>
</evidence>
<evidence type="ECO:0000305" key="4"/>
<name>VPS10_CANDC</name>
<accession>B9W9N8</accession>
<protein>
    <recommendedName>
        <fullName>Vacuolar protein sorting/targeting protein 10</fullName>
    </recommendedName>
    <alternativeName>
        <fullName>Carboxypeptidase Y receptor</fullName>
        <shortName>CPY receptor</shortName>
    </alternativeName>
    <alternativeName>
        <fullName>Sortilin VPS10</fullName>
    </alternativeName>
    <alternativeName>
        <fullName>Vacuolar carboxypeptidase sorting receptor VPS10</fullName>
    </alternativeName>
</protein>
<sequence>MRNNNCNWLIFLLAFILSLTTAYTPDISVVKNNSPAREIKYFDDSSTLLVLRDDHLLISKNDGKSFEEISDIKDPIIYFEMDPTNKNRAFAMTLSQKQYITEDQGNRWRTFEIDLFNGEMASIPKITFNFENPNYLMISNYECPEGQRLNRNCKHRYFYTKDGFKSKPTKLSVDAHVCRFAKSTKTSKIGNSETVFCTVNQLNSYGHIVESHLYNSNDFFQTKNEIKIKPLDSSSGEIIDIKIEEDFMIVVSRMDKFNEKSLINAYVSRDGENFVRADLDIDIKYGVMSFLPSSVSSLFLTIMDYNSRAFQTASFYGSDSSGLHFTKLLDNVAGGNIQKIENIDGAWIANIGVDSNNPYDGDKSLLDNLFGGTYAKDIVSKVSINDGKDWSLIKLNDNSCKIEDDCSLHLWDFTELDGEGKFVTGPTPGILLGVGNKGKNLAHKFDKMKTYVSRDGGVTWDKALDFPAVFAFGDQGNVILAVPYNGKKKYDAAKHFYFSLDQGKSWDKVDLKHPIYPLSILTTIDGTSRKFIIGGIDDSRKSENEYIYSVDFTNAFDGKTCGDDDFEEFVARKSNIDDEPLCIYGHREKFRRRKQDAQCFVNKLFEDVKVIEDPCQCTEHDFECGPGFKLSEKDSANVCVPDRKQLSRLCQSKSELSLPNKVLVEGNKCNMGDKKLEDFVSQETLKCSDYVDGDNGDKQNPNQGDSNQIEVHINDFEGKLAQYQYIAESQDKNAADNIVIKTMDDRVWISNNGGVSFVRVPISDKILGFYAGPIPGQVILITATNLIYVSDDGGATFIKRRIPTQPSPRVDRAIAFHNEKVERFIWFGEECESNGRCTSNAYITDDAGATFNKLMANVKTCDYVGAVLESGDDELIYCSAQNSLDNNKLALFSLKESSSEEPKKVFENIVGYAIAGTYVVVATIDDKKDSLLSKVTVDGDVFADADFPHDLKVEPHQAFTVLDSSSKAIFMHVTTNEKPNFEYGQLLKSNSNGTYFVLALDNVNRNTVGYVDFDKIDGLEGTIIANVVANAQANEGTKNLQTLISHNDGSEWDKLVPPTVDSEGKKYQCTGQPLNKCALHLHGFTERADYRDTFSSGSATGFLIGVGNVGEFLTPMDDSSTATFLSTDGGVTWKEIKKGVYMWEYGDQGTILVLVNAVEETDVLYYSLDEGQTWKEYGFTDYKIKAHDLATVPTDTARKFIIFAQNSKDHRDIQTYTIDFTNIYPRQCQLNLDDPEHDDYEYWSPVHPIGGDKCMFGHESKYLRRANGHTDCFIGSAPLSDGYKLEKNCSCTRRDYECDYNYVRDVNDNTCKLVKGMTSADRKTTMCSKENAFQYFESTGYRKIPLSTCKGGQQFDNWNPKPCPGKEKIFNEYYGREVKGHKLFFLIFIPLIIFLGTVLFVYDRGIRRNGGFKRLGQIRLNDDDDDFNPIENDQIDVVVNKIVKGGVYTVAVLIATVKTIRKIDRMMLEKLGNVIFRRSPGRRNYVSVPNDFDEEEELFGDYQDNLDDELEDAVFNQDDNLVRTPFVDDIEETETEAQQGEQSNPRDERLFDIDDNEEEEQQQEVSKPAPS</sequence>
<feature type="signal peptide" evidence="2">
    <location>
        <begin position="1"/>
        <end position="22"/>
    </location>
</feature>
<feature type="chain" id="PRO_0000407510" description="Vacuolar protein sorting/targeting protein 10">
    <location>
        <begin position="23"/>
        <end position="1571"/>
    </location>
</feature>
<feature type="topological domain" description="Lumenal" evidence="2">
    <location>
        <begin position="23"/>
        <end position="1382"/>
    </location>
</feature>
<feature type="transmembrane region" description="Helical" evidence="2">
    <location>
        <begin position="1383"/>
        <end position="1403"/>
    </location>
</feature>
<feature type="topological domain" description="Cytoplasmic" evidence="2">
    <location>
        <begin position="1404"/>
        <end position="1571"/>
    </location>
</feature>
<feature type="repeat" description="BNR 1">
    <location>
        <begin position="451"/>
        <end position="461"/>
    </location>
</feature>
<feature type="repeat" description="BNR 2">
    <location>
        <begin position="497"/>
        <end position="507"/>
    </location>
</feature>
<feature type="repeat" description="BNR 3">
    <location>
        <begin position="788"/>
        <end position="797"/>
    </location>
</feature>
<feature type="repeat" description="BNR 4">
    <location>
        <begin position="842"/>
        <end position="852"/>
    </location>
</feature>
<feature type="repeat" description="BNR 5">
    <location>
        <begin position="1124"/>
        <end position="1134"/>
    </location>
</feature>
<feature type="repeat" description="BNR 6">
    <location>
        <begin position="1165"/>
        <end position="1175"/>
    </location>
</feature>
<feature type="region of interest" description="Disordered" evidence="3">
    <location>
        <begin position="1527"/>
        <end position="1571"/>
    </location>
</feature>
<feature type="compositionally biased region" description="Acidic residues" evidence="3">
    <location>
        <begin position="1553"/>
        <end position="1562"/>
    </location>
</feature>
<feature type="glycosylation site" description="N-linked (GlcNAc...) asparagine" evidence="2">
    <location>
        <position position="992"/>
    </location>
</feature>
<feature type="glycosylation site" description="N-linked (GlcNAc...) asparagine" evidence="2">
    <location>
        <position position="1288"/>
    </location>
</feature>
<comment type="function">
    <text evidence="1">Functions as a sorting receptor in the Golgi compartment required for the intracellular sorting and delivery of soluble vacuolar proteins, like carboxypeptidase Y (CPY) and proteinase A. Executes multiple rounds of sorting by cycling between the late Golgi and a prevacuolar endosome-like compartment (By similarity).</text>
</comment>
<comment type="subcellular location">
    <subcellularLocation>
        <location evidence="1">Golgi apparatus</location>
        <location evidence="1">trans-Golgi network membrane</location>
        <topology evidence="1">Single-pass type I membrane protein</topology>
    </subcellularLocation>
    <subcellularLocation>
        <location evidence="1">Prevacuolar compartment membrane</location>
        <topology evidence="1">Single-pass type I membrane protein</topology>
    </subcellularLocation>
    <text evidence="1">Cycles between the Golgi apparatus and the prevacuolar compartment.</text>
</comment>
<comment type="similarity">
    <text evidence="4">Belongs to the VPS10-related sortilin family.</text>
</comment>
<reference key="1">
    <citation type="journal article" date="2009" name="Genome Res.">
        <title>Comparative genomics of the fungal pathogens Candida dubliniensis and Candida albicans.</title>
        <authorList>
            <person name="Jackson A.P."/>
            <person name="Gamble J.A."/>
            <person name="Yeomans T."/>
            <person name="Moran G.P."/>
            <person name="Saunders D."/>
            <person name="Harris D."/>
            <person name="Aslett M."/>
            <person name="Barrell J.F."/>
            <person name="Butler G."/>
            <person name="Citiulo F."/>
            <person name="Coleman D.C."/>
            <person name="de Groot P.W.J."/>
            <person name="Goodwin T.J."/>
            <person name="Quail M.A."/>
            <person name="McQuillan J."/>
            <person name="Munro C.A."/>
            <person name="Pain A."/>
            <person name="Poulter R.T."/>
            <person name="Rajandream M.A."/>
            <person name="Renauld H."/>
            <person name="Spiering M.J."/>
            <person name="Tivey A."/>
            <person name="Gow N.A.R."/>
            <person name="Barrell B."/>
            <person name="Sullivan D.J."/>
            <person name="Berriman M."/>
        </authorList>
    </citation>
    <scope>NUCLEOTIDE SEQUENCE [LARGE SCALE GENOMIC DNA]</scope>
    <source>
        <strain>CD36 / ATCC MYA-646 / CBS 7987 / NCPF 3949 / NRRL Y-17841</strain>
    </source>
</reference>
<dbReference type="EMBL" id="FM992688">
    <property type="protein sequence ID" value="CAX45523.1"/>
    <property type="molecule type" value="Genomic_DNA"/>
</dbReference>
<dbReference type="RefSeq" id="XP_002417808.1">
    <property type="nucleotide sequence ID" value="XM_002417763.1"/>
</dbReference>
<dbReference type="SMR" id="B9W9N8"/>
<dbReference type="GlyCosmos" id="B9W9N8">
    <property type="glycosylation" value="2 sites, No reported glycans"/>
</dbReference>
<dbReference type="GeneID" id="8045358"/>
<dbReference type="KEGG" id="cdu:CD36_11680"/>
<dbReference type="CGD" id="CAL0000168359">
    <property type="gene designation" value="Cd36_11680"/>
</dbReference>
<dbReference type="VEuPathDB" id="FungiDB:CD36_11680"/>
<dbReference type="eggNOG" id="KOG3511">
    <property type="taxonomic scope" value="Eukaryota"/>
</dbReference>
<dbReference type="HOGENOM" id="CLU_000700_0_1_1"/>
<dbReference type="OrthoDB" id="443634at2759"/>
<dbReference type="Proteomes" id="UP000002605">
    <property type="component" value="Chromosome 1"/>
</dbReference>
<dbReference type="GO" id="GO:0005829">
    <property type="term" value="C:cytosol"/>
    <property type="evidence" value="ECO:0007669"/>
    <property type="project" value="GOC"/>
</dbReference>
<dbReference type="GO" id="GO:0005794">
    <property type="term" value="C:Golgi apparatus"/>
    <property type="evidence" value="ECO:0007669"/>
    <property type="project" value="UniProtKB-SubCell"/>
</dbReference>
<dbReference type="GO" id="GO:0016020">
    <property type="term" value="C:membrane"/>
    <property type="evidence" value="ECO:0007669"/>
    <property type="project" value="UniProtKB-KW"/>
</dbReference>
<dbReference type="GO" id="GO:0006895">
    <property type="term" value="P:Golgi to endosome transport"/>
    <property type="evidence" value="ECO:0007669"/>
    <property type="project" value="TreeGrafter"/>
</dbReference>
<dbReference type="GO" id="GO:0006896">
    <property type="term" value="P:Golgi to vacuole transport"/>
    <property type="evidence" value="ECO:0007669"/>
    <property type="project" value="TreeGrafter"/>
</dbReference>
<dbReference type="GO" id="GO:0006623">
    <property type="term" value="P:protein targeting to vacuole"/>
    <property type="evidence" value="ECO:0007669"/>
    <property type="project" value="TreeGrafter"/>
</dbReference>
<dbReference type="CDD" id="cd15482">
    <property type="entry name" value="Sialidase_non-viral"/>
    <property type="match status" value="1"/>
</dbReference>
<dbReference type="FunFam" id="3.30.60.270:FF:000005">
    <property type="entry name" value="Sortilin"/>
    <property type="match status" value="1"/>
</dbReference>
<dbReference type="Gene3D" id="2.10.70.80">
    <property type="match status" value="2"/>
</dbReference>
<dbReference type="Gene3D" id="3.30.60.270">
    <property type="match status" value="1"/>
</dbReference>
<dbReference type="Gene3D" id="2.130.10.10">
    <property type="entry name" value="YVTN repeat-like/Quinoprotein amine dehydrogenase"/>
    <property type="match status" value="2"/>
</dbReference>
<dbReference type="InterPro" id="IPR031777">
    <property type="entry name" value="Sortilin_C"/>
</dbReference>
<dbReference type="InterPro" id="IPR031778">
    <property type="entry name" value="Sortilin_N"/>
</dbReference>
<dbReference type="InterPro" id="IPR006581">
    <property type="entry name" value="VPS10"/>
</dbReference>
<dbReference type="InterPro" id="IPR050310">
    <property type="entry name" value="VPS10-sortilin"/>
</dbReference>
<dbReference type="InterPro" id="IPR015943">
    <property type="entry name" value="WD40/YVTN_repeat-like_dom_sf"/>
</dbReference>
<dbReference type="PANTHER" id="PTHR12106">
    <property type="entry name" value="SORTILIN RELATED"/>
    <property type="match status" value="1"/>
</dbReference>
<dbReference type="PANTHER" id="PTHR12106:SF27">
    <property type="entry name" value="SORTILIN-RELATED RECEPTOR"/>
    <property type="match status" value="1"/>
</dbReference>
<dbReference type="Pfam" id="PF15902">
    <property type="entry name" value="Sortilin-Vps10"/>
    <property type="match status" value="2"/>
</dbReference>
<dbReference type="Pfam" id="PF15901">
    <property type="entry name" value="Sortilin_C"/>
    <property type="match status" value="2"/>
</dbReference>
<dbReference type="SMART" id="SM00602">
    <property type="entry name" value="VPS10"/>
    <property type="match status" value="2"/>
</dbReference>
<dbReference type="SUPFAM" id="SSF110296">
    <property type="entry name" value="Oligoxyloglucan reducing end-specific cellobiohydrolase"/>
    <property type="match status" value="2"/>
</dbReference>
<proteinExistence type="inferred from homology"/>
<keyword id="KW-0325">Glycoprotein</keyword>
<keyword id="KW-0333">Golgi apparatus</keyword>
<keyword id="KW-0472">Membrane</keyword>
<keyword id="KW-0653">Protein transport</keyword>
<keyword id="KW-0675">Receptor</keyword>
<keyword id="KW-0677">Repeat</keyword>
<keyword id="KW-0732">Signal</keyword>
<keyword id="KW-0812">Transmembrane</keyword>
<keyword id="KW-1133">Transmembrane helix</keyword>
<keyword id="KW-0813">Transport</keyword>
<organism>
    <name type="scientific">Candida dubliniensis (strain CD36 / ATCC MYA-646 / CBS 7987 / NCPF 3949 / NRRL Y-17841)</name>
    <name type="common">Yeast</name>
    <dbReference type="NCBI Taxonomy" id="573826"/>
    <lineage>
        <taxon>Eukaryota</taxon>
        <taxon>Fungi</taxon>
        <taxon>Dikarya</taxon>
        <taxon>Ascomycota</taxon>
        <taxon>Saccharomycotina</taxon>
        <taxon>Pichiomycetes</taxon>
        <taxon>Debaryomycetaceae</taxon>
        <taxon>Candida/Lodderomyces clade</taxon>
        <taxon>Candida</taxon>
    </lineage>
</organism>
<gene>
    <name type="primary">VPS10</name>
    <name type="ORF">CD36_11680</name>
</gene>